<keyword id="KW-0687">Ribonucleoprotein</keyword>
<keyword id="KW-0689">Ribosomal protein</keyword>
<keyword id="KW-0694">RNA-binding</keyword>
<keyword id="KW-0699">rRNA-binding</keyword>
<keyword id="KW-0820">tRNA-binding</keyword>
<sequence length="157" mass="17793">MSRRNRAPKRDILPDPKFKSQVVAKFVNHIMLDGKKSIAEKIVYGAFDKIKAKDASANEVEVFEKALDSVSPMVEVKSRRVGGATYQVPVEVRPERRQTLGMRWIIDAARKRKESTMGDRVAAEILEAIEGRGAAVKKREDTHKMAEANKAFAHFRW</sequence>
<protein>
    <recommendedName>
        <fullName evidence="1">Small ribosomal subunit protein uS7</fullName>
    </recommendedName>
    <alternativeName>
        <fullName evidence="2">30S ribosomal protein S7</fullName>
    </alternativeName>
</protein>
<accession>B0U0Z2</accession>
<evidence type="ECO:0000255" key="1">
    <source>
        <dbReference type="HAMAP-Rule" id="MF_00480"/>
    </source>
</evidence>
<evidence type="ECO:0000305" key="2"/>
<comment type="function">
    <text evidence="1">One of the primary rRNA binding proteins, it binds directly to 16S rRNA where it nucleates assembly of the head domain of the 30S subunit. Is located at the subunit interface close to the decoding center, probably blocks exit of the E-site tRNA.</text>
</comment>
<comment type="subunit">
    <text evidence="1">Part of the 30S ribosomal subunit. Contacts proteins S9 and S11.</text>
</comment>
<comment type="similarity">
    <text evidence="1">Belongs to the universal ribosomal protein uS7 family.</text>
</comment>
<proteinExistence type="inferred from homology"/>
<name>RS7_FRAP2</name>
<feature type="chain" id="PRO_1000081282" description="Small ribosomal subunit protein uS7">
    <location>
        <begin position="1"/>
        <end position="157"/>
    </location>
</feature>
<gene>
    <name evidence="1" type="primary">rpsG</name>
    <name type="ordered locus">Fphi_0589</name>
</gene>
<organism>
    <name type="scientific">Francisella philomiragia subsp. philomiragia (strain ATCC 25017 / CCUG 19701 / FSC 153 / O#319-036)</name>
    <dbReference type="NCBI Taxonomy" id="484022"/>
    <lineage>
        <taxon>Bacteria</taxon>
        <taxon>Pseudomonadati</taxon>
        <taxon>Pseudomonadota</taxon>
        <taxon>Gammaproteobacteria</taxon>
        <taxon>Thiotrichales</taxon>
        <taxon>Francisellaceae</taxon>
        <taxon>Francisella</taxon>
    </lineage>
</organism>
<dbReference type="EMBL" id="CP000937">
    <property type="protein sequence ID" value="ABZ86808.1"/>
    <property type="molecule type" value="Genomic_DNA"/>
</dbReference>
<dbReference type="SMR" id="B0U0Z2"/>
<dbReference type="KEGG" id="fph:Fphi_0589"/>
<dbReference type="eggNOG" id="COG0049">
    <property type="taxonomic scope" value="Bacteria"/>
</dbReference>
<dbReference type="HOGENOM" id="CLU_072226_1_1_6"/>
<dbReference type="GO" id="GO:0015935">
    <property type="term" value="C:small ribosomal subunit"/>
    <property type="evidence" value="ECO:0007669"/>
    <property type="project" value="InterPro"/>
</dbReference>
<dbReference type="GO" id="GO:0019843">
    <property type="term" value="F:rRNA binding"/>
    <property type="evidence" value="ECO:0007669"/>
    <property type="project" value="UniProtKB-UniRule"/>
</dbReference>
<dbReference type="GO" id="GO:0003735">
    <property type="term" value="F:structural constituent of ribosome"/>
    <property type="evidence" value="ECO:0007669"/>
    <property type="project" value="InterPro"/>
</dbReference>
<dbReference type="GO" id="GO:0000049">
    <property type="term" value="F:tRNA binding"/>
    <property type="evidence" value="ECO:0007669"/>
    <property type="project" value="UniProtKB-UniRule"/>
</dbReference>
<dbReference type="GO" id="GO:0006412">
    <property type="term" value="P:translation"/>
    <property type="evidence" value="ECO:0007669"/>
    <property type="project" value="UniProtKB-UniRule"/>
</dbReference>
<dbReference type="CDD" id="cd14869">
    <property type="entry name" value="uS7_Bacteria"/>
    <property type="match status" value="1"/>
</dbReference>
<dbReference type="FunFam" id="1.10.455.10:FF:000001">
    <property type="entry name" value="30S ribosomal protein S7"/>
    <property type="match status" value="1"/>
</dbReference>
<dbReference type="Gene3D" id="1.10.455.10">
    <property type="entry name" value="Ribosomal protein S7 domain"/>
    <property type="match status" value="1"/>
</dbReference>
<dbReference type="HAMAP" id="MF_00480_B">
    <property type="entry name" value="Ribosomal_uS7_B"/>
    <property type="match status" value="1"/>
</dbReference>
<dbReference type="InterPro" id="IPR000235">
    <property type="entry name" value="Ribosomal_uS7"/>
</dbReference>
<dbReference type="InterPro" id="IPR005717">
    <property type="entry name" value="Ribosomal_uS7_bac/org-type"/>
</dbReference>
<dbReference type="InterPro" id="IPR020606">
    <property type="entry name" value="Ribosomal_uS7_CS"/>
</dbReference>
<dbReference type="InterPro" id="IPR023798">
    <property type="entry name" value="Ribosomal_uS7_dom"/>
</dbReference>
<dbReference type="InterPro" id="IPR036823">
    <property type="entry name" value="Ribosomal_uS7_dom_sf"/>
</dbReference>
<dbReference type="NCBIfam" id="TIGR01029">
    <property type="entry name" value="rpsG_bact"/>
    <property type="match status" value="1"/>
</dbReference>
<dbReference type="PANTHER" id="PTHR11205">
    <property type="entry name" value="RIBOSOMAL PROTEIN S7"/>
    <property type="match status" value="1"/>
</dbReference>
<dbReference type="Pfam" id="PF00177">
    <property type="entry name" value="Ribosomal_S7"/>
    <property type="match status" value="1"/>
</dbReference>
<dbReference type="PIRSF" id="PIRSF002122">
    <property type="entry name" value="RPS7p_RPS7a_RPS5e_RPS7o"/>
    <property type="match status" value="1"/>
</dbReference>
<dbReference type="SUPFAM" id="SSF47973">
    <property type="entry name" value="Ribosomal protein S7"/>
    <property type="match status" value="1"/>
</dbReference>
<dbReference type="PROSITE" id="PS00052">
    <property type="entry name" value="RIBOSOMAL_S7"/>
    <property type="match status" value="1"/>
</dbReference>
<reference key="1">
    <citation type="submission" date="2007-12" db="EMBL/GenBank/DDBJ databases">
        <title>Complete sequence of chromosome of Francisella philomiragia subsp. philomiragia ATCC 25017.</title>
        <authorList>
            <consortium name="US DOE Joint Genome Institute"/>
            <person name="Copeland A."/>
            <person name="Lucas S."/>
            <person name="Lapidus A."/>
            <person name="Barry K."/>
            <person name="Detter J.C."/>
            <person name="Glavina del Rio T."/>
            <person name="Hammon N."/>
            <person name="Israni S."/>
            <person name="Dalin E."/>
            <person name="Tice H."/>
            <person name="Pitluck S."/>
            <person name="Chain P."/>
            <person name="Malfatti S."/>
            <person name="Shin M."/>
            <person name="Vergez L."/>
            <person name="Schmutz J."/>
            <person name="Larimer F."/>
            <person name="Land M."/>
            <person name="Hauser L."/>
            <person name="Richardson P."/>
        </authorList>
    </citation>
    <scope>NUCLEOTIDE SEQUENCE [LARGE SCALE GENOMIC DNA]</scope>
    <source>
        <strain>ATCC 25017 / CCUG 19701 / FSC 153 / O#319-036</strain>
    </source>
</reference>